<sequence length="149" mass="17198">MHCPFCFAVDTKVIDSRLVGEGSSVRRRRQCLVCNERFTTFEVAELVMPRVIKSNDVREPFNEDKLRSGMLRALEKRPVSADDVEMALNHIKSQLRATGEREVPSKMIGNLVMEQLKKLDKVAYIRFASVYRSFEDIKDFGEEIARLQD</sequence>
<organism>
    <name type="scientific">Salmonella paratyphi B (strain ATCC BAA-1250 / SPB7)</name>
    <dbReference type="NCBI Taxonomy" id="1016998"/>
    <lineage>
        <taxon>Bacteria</taxon>
        <taxon>Pseudomonadati</taxon>
        <taxon>Pseudomonadota</taxon>
        <taxon>Gammaproteobacteria</taxon>
        <taxon>Enterobacterales</taxon>
        <taxon>Enterobacteriaceae</taxon>
        <taxon>Salmonella</taxon>
    </lineage>
</organism>
<name>NRDR_SALPB</name>
<evidence type="ECO:0000255" key="1">
    <source>
        <dbReference type="HAMAP-Rule" id="MF_00440"/>
    </source>
</evidence>
<accession>A9MX16</accession>
<protein>
    <recommendedName>
        <fullName evidence="1">Transcriptional repressor NrdR</fullName>
    </recommendedName>
</protein>
<gene>
    <name evidence="1" type="primary">nrdR</name>
    <name type="ordered locus">SPAB_03168</name>
</gene>
<dbReference type="EMBL" id="CP000886">
    <property type="protein sequence ID" value="ABX68529.1"/>
    <property type="molecule type" value="Genomic_DNA"/>
</dbReference>
<dbReference type="RefSeq" id="WP_000543533.1">
    <property type="nucleotide sequence ID" value="NC_010102.1"/>
</dbReference>
<dbReference type="SMR" id="A9MX16"/>
<dbReference type="GeneID" id="66754886"/>
<dbReference type="KEGG" id="spq:SPAB_03168"/>
<dbReference type="PATRIC" id="fig|1016998.12.peg.2989"/>
<dbReference type="HOGENOM" id="CLU_108412_0_0_6"/>
<dbReference type="BioCyc" id="SENT1016998:SPAB_RS12945-MONOMER"/>
<dbReference type="Proteomes" id="UP000008556">
    <property type="component" value="Chromosome"/>
</dbReference>
<dbReference type="GO" id="GO:0005524">
    <property type="term" value="F:ATP binding"/>
    <property type="evidence" value="ECO:0007669"/>
    <property type="project" value="UniProtKB-KW"/>
</dbReference>
<dbReference type="GO" id="GO:0003677">
    <property type="term" value="F:DNA binding"/>
    <property type="evidence" value="ECO:0007669"/>
    <property type="project" value="UniProtKB-KW"/>
</dbReference>
<dbReference type="GO" id="GO:0008270">
    <property type="term" value="F:zinc ion binding"/>
    <property type="evidence" value="ECO:0007669"/>
    <property type="project" value="UniProtKB-UniRule"/>
</dbReference>
<dbReference type="GO" id="GO:0045892">
    <property type="term" value="P:negative regulation of DNA-templated transcription"/>
    <property type="evidence" value="ECO:0007669"/>
    <property type="project" value="UniProtKB-UniRule"/>
</dbReference>
<dbReference type="HAMAP" id="MF_00440">
    <property type="entry name" value="NrdR"/>
    <property type="match status" value="1"/>
</dbReference>
<dbReference type="InterPro" id="IPR005144">
    <property type="entry name" value="ATP-cone_dom"/>
</dbReference>
<dbReference type="InterPro" id="IPR055173">
    <property type="entry name" value="NrdR-like_N"/>
</dbReference>
<dbReference type="InterPro" id="IPR003796">
    <property type="entry name" value="RNR_NrdR-like"/>
</dbReference>
<dbReference type="NCBIfam" id="TIGR00244">
    <property type="entry name" value="transcriptional regulator NrdR"/>
    <property type="match status" value="1"/>
</dbReference>
<dbReference type="PANTHER" id="PTHR30455">
    <property type="entry name" value="TRANSCRIPTIONAL REPRESSOR NRDR"/>
    <property type="match status" value="1"/>
</dbReference>
<dbReference type="PANTHER" id="PTHR30455:SF2">
    <property type="entry name" value="TRANSCRIPTIONAL REPRESSOR NRDR"/>
    <property type="match status" value="1"/>
</dbReference>
<dbReference type="Pfam" id="PF03477">
    <property type="entry name" value="ATP-cone"/>
    <property type="match status" value="1"/>
</dbReference>
<dbReference type="Pfam" id="PF22811">
    <property type="entry name" value="Zn_ribbon_NrdR"/>
    <property type="match status" value="1"/>
</dbReference>
<dbReference type="PROSITE" id="PS51161">
    <property type="entry name" value="ATP_CONE"/>
    <property type="match status" value="1"/>
</dbReference>
<proteinExistence type="inferred from homology"/>
<keyword id="KW-0067">ATP-binding</keyword>
<keyword id="KW-0238">DNA-binding</keyword>
<keyword id="KW-0479">Metal-binding</keyword>
<keyword id="KW-0547">Nucleotide-binding</keyword>
<keyword id="KW-0678">Repressor</keyword>
<keyword id="KW-0804">Transcription</keyword>
<keyword id="KW-0805">Transcription regulation</keyword>
<keyword id="KW-0862">Zinc</keyword>
<keyword id="KW-0863">Zinc-finger</keyword>
<reference key="1">
    <citation type="submission" date="2007-11" db="EMBL/GenBank/DDBJ databases">
        <authorList>
            <consortium name="The Salmonella enterica serovar Paratyphi B Genome Sequencing Project"/>
            <person name="McClelland M."/>
            <person name="Sanderson E.K."/>
            <person name="Porwollik S."/>
            <person name="Spieth J."/>
            <person name="Clifton W.S."/>
            <person name="Fulton R."/>
            <person name="Cordes M."/>
            <person name="Wollam A."/>
            <person name="Shah N."/>
            <person name="Pepin K."/>
            <person name="Bhonagiri V."/>
            <person name="Nash W."/>
            <person name="Johnson M."/>
            <person name="Thiruvilangam P."/>
            <person name="Wilson R."/>
        </authorList>
    </citation>
    <scope>NUCLEOTIDE SEQUENCE [LARGE SCALE GENOMIC DNA]</scope>
    <source>
        <strain>ATCC BAA-1250 / SPB7</strain>
    </source>
</reference>
<feature type="chain" id="PRO_1000080818" description="Transcriptional repressor NrdR">
    <location>
        <begin position="1"/>
        <end position="149"/>
    </location>
</feature>
<feature type="domain" description="ATP-cone" evidence="1">
    <location>
        <begin position="49"/>
        <end position="139"/>
    </location>
</feature>
<feature type="zinc finger region" evidence="1">
    <location>
        <begin position="3"/>
        <end position="34"/>
    </location>
</feature>
<comment type="function">
    <text evidence="1">Negatively regulates transcription of bacterial ribonucleotide reductase nrd genes and operons by binding to NrdR-boxes.</text>
</comment>
<comment type="cofactor">
    <cofactor evidence="1">
        <name>Zn(2+)</name>
        <dbReference type="ChEBI" id="CHEBI:29105"/>
    </cofactor>
    <text evidence="1">Binds 1 zinc ion.</text>
</comment>
<comment type="similarity">
    <text evidence="1">Belongs to the NrdR family.</text>
</comment>